<protein>
    <recommendedName>
        <fullName evidence="2">Cytosolic 5'-nucleotidase 3</fullName>
        <ecNumber evidence="2">3.1.3.5</ecNumber>
    </recommendedName>
    <alternativeName>
        <fullName>Cytosolic 5'-nucleotidase III</fullName>
        <shortName>cN-III</shortName>
    </alternativeName>
</protein>
<proteinExistence type="evidence at transcript level"/>
<accession>Q7SYN4</accession>
<sequence length="286" mass="32937">MMPEFEKNTVHIRDPERVEQIICGLIKGGASKLQIITDFDMTLSRFAVNGKRCPSCHNIIDNSKLVTDDCRKKLVHLKETYYPIEIDPHLTMEEKYPFMVEWYFKSHTLLVEQRLEKDKLPEAVRESDVSLKEGYEQFFDRLHQHSVPVFIFSAGLGDVLEEIIRQAGVYHPNVKVVSNFMDFDDNGVLKGFKGELIHVYNKHDGALRNTEYFKQLKDNGNIILLGDSLGDLTMADGVPNVENILKIGYLNDKVEELLEKYMDSYNIVLARDETLEVPNSILQKIL</sequence>
<feature type="chain" id="PRO_0000328952" description="Cytosolic 5'-nucleotidase 3">
    <location>
        <begin position="1"/>
        <end position="286"/>
    </location>
</feature>
<feature type="active site" description="Nucleophile" evidence="2">
    <location>
        <position position="38"/>
    </location>
</feature>
<feature type="active site" description="Proton donor" evidence="2">
    <location>
        <position position="40"/>
    </location>
</feature>
<feature type="binding site" evidence="2">
    <location>
        <position position="38"/>
    </location>
    <ligand>
        <name>Mg(2+)</name>
        <dbReference type="ChEBI" id="CHEBI:18420"/>
    </ligand>
</feature>
<feature type="binding site" evidence="2">
    <location>
        <position position="40"/>
    </location>
    <ligand>
        <name>Mg(2+)</name>
        <dbReference type="ChEBI" id="CHEBI:18420"/>
    </ligand>
</feature>
<feature type="binding site" evidence="3">
    <location>
        <position position="85"/>
    </location>
    <ligand>
        <name>substrate</name>
    </ligand>
</feature>
<feature type="binding site" evidence="3">
    <location>
        <position position="106"/>
    </location>
    <ligand>
        <name>substrate</name>
    </ligand>
</feature>
<feature type="binding site" evidence="2">
    <location>
        <begin position="153"/>
        <end position="154"/>
    </location>
    <ligand>
        <name>substrate</name>
    </ligand>
</feature>
<feature type="binding site" evidence="2">
    <location>
        <position position="202"/>
    </location>
    <ligand>
        <name>substrate</name>
    </ligand>
</feature>
<feature type="binding site" evidence="2">
    <location>
        <position position="227"/>
    </location>
    <ligand>
        <name>Mg(2+)</name>
        <dbReference type="ChEBI" id="CHEBI:18420"/>
    </ligand>
</feature>
<keyword id="KW-0963">Cytoplasm</keyword>
<keyword id="KW-0378">Hydrolase</keyword>
<keyword id="KW-0460">Magnesium</keyword>
<keyword id="KW-0479">Metal-binding</keyword>
<keyword id="KW-0546">Nucleotide metabolism</keyword>
<keyword id="KW-0547">Nucleotide-binding</keyword>
<keyword id="KW-1185">Reference proteome</keyword>
<keyword id="KW-0808">Transferase</keyword>
<evidence type="ECO:0000250" key="1"/>
<evidence type="ECO:0000250" key="2">
    <source>
        <dbReference type="UniProtKB" id="Q9D020"/>
    </source>
</evidence>
<evidence type="ECO:0000250" key="3">
    <source>
        <dbReference type="UniProtKB" id="Q9W197"/>
    </source>
</evidence>
<evidence type="ECO:0000305" key="4"/>
<comment type="function">
    <text evidence="1">Can act both as nucleotidase and as phosphotransferase.</text>
</comment>
<comment type="catalytic activity">
    <reaction evidence="2">
        <text>a ribonucleoside 5'-phosphate + H2O = a ribonucleoside + phosphate</text>
        <dbReference type="Rhea" id="RHEA:12484"/>
        <dbReference type="ChEBI" id="CHEBI:15377"/>
        <dbReference type="ChEBI" id="CHEBI:18254"/>
        <dbReference type="ChEBI" id="CHEBI:43474"/>
        <dbReference type="ChEBI" id="CHEBI:58043"/>
        <dbReference type="EC" id="3.1.3.5"/>
    </reaction>
</comment>
<comment type="subcellular location">
    <subcellularLocation>
        <location evidence="4">Cytoplasm</location>
    </subcellularLocation>
</comment>
<comment type="similarity">
    <text evidence="4">Belongs to the pyrimidine 5'-nucleotidase family.</text>
</comment>
<comment type="sequence caution" evidence="4">
    <conflict type="erroneous initiation">
        <sequence resource="EMBL-CDS" id="AAH54650"/>
    </conflict>
</comment>
<dbReference type="EC" id="3.1.3.5" evidence="2"/>
<dbReference type="EMBL" id="BC054650">
    <property type="protein sequence ID" value="AAH54650.1"/>
    <property type="status" value="ALT_INIT"/>
    <property type="molecule type" value="mRNA"/>
</dbReference>
<dbReference type="RefSeq" id="NP_955854.1">
    <property type="nucleotide sequence ID" value="NM_199560.1"/>
</dbReference>
<dbReference type="SMR" id="Q7SYN4"/>
<dbReference type="FunCoup" id="Q7SYN4">
    <property type="interactions" value="747"/>
</dbReference>
<dbReference type="STRING" id="7955.ENSDARP00000124641"/>
<dbReference type="PaxDb" id="7955-ENSDARP00000124389"/>
<dbReference type="PeptideAtlas" id="Q7SYN4"/>
<dbReference type="GeneID" id="321720"/>
<dbReference type="KEGG" id="dre:321720"/>
<dbReference type="AGR" id="ZFIN:ZDB-GENE-030131-439"/>
<dbReference type="CTD" id="51251"/>
<dbReference type="ZFIN" id="ZDB-GENE-030131-439">
    <property type="gene designation" value="nt5c3a"/>
</dbReference>
<dbReference type="eggNOG" id="KOG3128">
    <property type="taxonomic scope" value="Eukaryota"/>
</dbReference>
<dbReference type="InParanoid" id="Q7SYN4"/>
<dbReference type="OrthoDB" id="10014216at2759"/>
<dbReference type="PhylomeDB" id="Q7SYN4"/>
<dbReference type="Reactome" id="R-DRE-73621">
    <property type="pathway name" value="Pyrimidine catabolism"/>
</dbReference>
<dbReference type="PRO" id="PR:Q7SYN4"/>
<dbReference type="Proteomes" id="UP000000437">
    <property type="component" value="Chromosome 16"/>
</dbReference>
<dbReference type="GO" id="GO:0005737">
    <property type="term" value="C:cytoplasm"/>
    <property type="evidence" value="ECO:0000318"/>
    <property type="project" value="GO_Central"/>
</dbReference>
<dbReference type="GO" id="GO:0008253">
    <property type="term" value="F:5'-nucleotidase activity"/>
    <property type="evidence" value="ECO:0000318"/>
    <property type="project" value="GO_Central"/>
</dbReference>
<dbReference type="GO" id="GO:0000287">
    <property type="term" value="F:magnesium ion binding"/>
    <property type="evidence" value="ECO:0007669"/>
    <property type="project" value="InterPro"/>
</dbReference>
<dbReference type="GO" id="GO:0000166">
    <property type="term" value="F:nucleotide binding"/>
    <property type="evidence" value="ECO:0007669"/>
    <property type="project" value="UniProtKB-KW"/>
</dbReference>
<dbReference type="GO" id="GO:0016740">
    <property type="term" value="F:transferase activity"/>
    <property type="evidence" value="ECO:0007669"/>
    <property type="project" value="UniProtKB-KW"/>
</dbReference>
<dbReference type="GO" id="GO:0009117">
    <property type="term" value="P:nucleotide metabolic process"/>
    <property type="evidence" value="ECO:0007669"/>
    <property type="project" value="UniProtKB-KW"/>
</dbReference>
<dbReference type="CDD" id="cd07504">
    <property type="entry name" value="HAD_5NT"/>
    <property type="match status" value="1"/>
</dbReference>
<dbReference type="FunFam" id="1.10.150.340:FF:000001">
    <property type="entry name" value="Cytosolic 5-nucleotidase 3-like"/>
    <property type="match status" value="1"/>
</dbReference>
<dbReference type="FunFam" id="3.40.50.1000:FF:000032">
    <property type="entry name" value="Cytosolic 5-nucleotidase 3-like"/>
    <property type="match status" value="1"/>
</dbReference>
<dbReference type="Gene3D" id="3.40.50.1000">
    <property type="entry name" value="HAD superfamily/HAD-like"/>
    <property type="match status" value="1"/>
</dbReference>
<dbReference type="Gene3D" id="1.10.150.340">
    <property type="entry name" value="Pyrimidine 5'-nucleotidase (UMPH-1), N-terminal domain"/>
    <property type="match status" value="1"/>
</dbReference>
<dbReference type="InterPro" id="IPR036412">
    <property type="entry name" value="HAD-like_sf"/>
</dbReference>
<dbReference type="InterPro" id="IPR023214">
    <property type="entry name" value="HAD_sf"/>
</dbReference>
<dbReference type="InterPro" id="IPR006434">
    <property type="entry name" value="Pyrimidine_nucleotidase_eu"/>
</dbReference>
<dbReference type="NCBIfam" id="TIGR01544">
    <property type="entry name" value="HAD-SF-IE"/>
    <property type="match status" value="1"/>
</dbReference>
<dbReference type="PANTHER" id="PTHR13045">
    <property type="entry name" value="5'-NUCLEOTIDASE"/>
    <property type="match status" value="1"/>
</dbReference>
<dbReference type="PANTHER" id="PTHR13045:SF14">
    <property type="entry name" value="CYTOSOLIC 5'-NUCLEOTIDASE 3A"/>
    <property type="match status" value="1"/>
</dbReference>
<dbReference type="Pfam" id="PF05822">
    <property type="entry name" value="UMPH-1"/>
    <property type="match status" value="1"/>
</dbReference>
<dbReference type="SFLD" id="SFLDG01128">
    <property type="entry name" value="C1.4:_5'-Nucleotidase_Like"/>
    <property type="match status" value="1"/>
</dbReference>
<dbReference type="SFLD" id="SFLDS00003">
    <property type="entry name" value="Haloacid_Dehalogenase"/>
    <property type="match status" value="1"/>
</dbReference>
<dbReference type="SUPFAM" id="SSF56784">
    <property type="entry name" value="HAD-like"/>
    <property type="match status" value="1"/>
</dbReference>
<reference key="1">
    <citation type="submission" date="2003-07" db="EMBL/GenBank/DDBJ databases">
        <authorList>
            <consortium name="NIH - Zebrafish Gene Collection (ZGC) project"/>
        </authorList>
    </citation>
    <scope>NUCLEOTIDE SEQUENCE [LARGE SCALE MRNA]</scope>
    <source>
        <strain>AB</strain>
    </source>
</reference>
<gene>
    <name type="primary">nt5c3</name>
    <name type="ORF">zgc:66117</name>
</gene>
<organism>
    <name type="scientific">Danio rerio</name>
    <name type="common">Zebrafish</name>
    <name type="synonym">Brachydanio rerio</name>
    <dbReference type="NCBI Taxonomy" id="7955"/>
    <lineage>
        <taxon>Eukaryota</taxon>
        <taxon>Metazoa</taxon>
        <taxon>Chordata</taxon>
        <taxon>Craniata</taxon>
        <taxon>Vertebrata</taxon>
        <taxon>Euteleostomi</taxon>
        <taxon>Actinopterygii</taxon>
        <taxon>Neopterygii</taxon>
        <taxon>Teleostei</taxon>
        <taxon>Ostariophysi</taxon>
        <taxon>Cypriniformes</taxon>
        <taxon>Danionidae</taxon>
        <taxon>Danioninae</taxon>
        <taxon>Danio</taxon>
    </lineage>
</organism>
<name>5NT3_DANRE</name>